<name>YF7A_PSEAE</name>
<feature type="chain" id="PRO_0000221617" description="UPF0153 protein PA1578.1">
    <location>
        <begin position="1"/>
        <end position="84"/>
    </location>
</feature>
<evidence type="ECO:0000305" key="1"/>
<accession>P58040</accession>
<proteinExistence type="inferred from homology"/>
<keyword id="KW-1185">Reference proteome</keyword>
<sequence>MQCRAGCGACCIAPSISSPLPGMPAGKPAGVRCLHLDENHLCGLFGRPERPAVCGQFGADPEICGDSREQALALIAEWEVITAA</sequence>
<reference key="1">
    <citation type="journal article" date="2000" name="Nature">
        <title>Complete genome sequence of Pseudomonas aeruginosa PAO1, an opportunistic pathogen.</title>
        <authorList>
            <person name="Stover C.K."/>
            <person name="Pham X.-Q.T."/>
            <person name="Erwin A.L."/>
            <person name="Mizoguchi S.D."/>
            <person name="Warrener P."/>
            <person name="Hickey M.J."/>
            <person name="Brinkman F.S.L."/>
            <person name="Hufnagle W.O."/>
            <person name="Kowalik D.J."/>
            <person name="Lagrou M."/>
            <person name="Garber R.L."/>
            <person name="Goltry L."/>
            <person name="Tolentino E."/>
            <person name="Westbrock-Wadman S."/>
            <person name="Yuan Y."/>
            <person name="Brody L.L."/>
            <person name="Coulter S.N."/>
            <person name="Folger K.R."/>
            <person name="Kas A."/>
            <person name="Larbig K."/>
            <person name="Lim R.M."/>
            <person name="Smith K.A."/>
            <person name="Spencer D.H."/>
            <person name="Wong G.K.-S."/>
            <person name="Wu Z."/>
            <person name="Paulsen I.T."/>
            <person name="Reizer J."/>
            <person name="Saier M.H. Jr."/>
            <person name="Hancock R.E.W."/>
            <person name="Lory S."/>
            <person name="Olson M.V."/>
        </authorList>
    </citation>
    <scope>NUCLEOTIDE SEQUENCE [LARGE SCALE GENOMIC DNA]</scope>
    <source>
        <strain>ATCC 15692 / DSM 22644 / CIP 104116 / JCM 14847 / LMG 12228 / 1C / PRS 101 / PAO1</strain>
    </source>
</reference>
<comment type="similarity">
    <text evidence="1">Belongs to the UPF0153 family.</text>
</comment>
<organism>
    <name type="scientific">Pseudomonas aeruginosa (strain ATCC 15692 / DSM 22644 / CIP 104116 / JCM 14847 / LMG 12228 / 1C / PRS 101 / PAO1)</name>
    <dbReference type="NCBI Taxonomy" id="208964"/>
    <lineage>
        <taxon>Bacteria</taxon>
        <taxon>Pseudomonadati</taxon>
        <taxon>Pseudomonadota</taxon>
        <taxon>Gammaproteobacteria</taxon>
        <taxon>Pseudomonadales</taxon>
        <taxon>Pseudomonadaceae</taxon>
        <taxon>Pseudomonas</taxon>
    </lineage>
</organism>
<dbReference type="EMBL" id="AE004091">
    <property type="status" value="NOT_ANNOTATED_CDS"/>
    <property type="molecule type" value="Genomic_DNA"/>
</dbReference>
<dbReference type="RefSeq" id="WP_003087397.1">
    <property type="nucleotide sequence ID" value="NZ_QZGE01000003.1"/>
</dbReference>
<dbReference type="RefSeq" id="YP_008719745.1">
    <property type="nucleotide sequence ID" value="NC_002516.2"/>
</dbReference>
<dbReference type="FunCoup" id="P58040">
    <property type="interactions" value="16"/>
</dbReference>
<dbReference type="KEGG" id="pae:PA1578a"/>
<dbReference type="InParanoid" id="P58040"/>
<dbReference type="OrthoDB" id="9803986at2"/>
<dbReference type="PhylomeDB" id="P58040"/>
<dbReference type="BioCyc" id="PAER208964:G1FZ6-1608-MONOMER"/>
<dbReference type="Proteomes" id="UP000002438">
    <property type="component" value="Chromosome"/>
</dbReference>
<dbReference type="InterPro" id="IPR005358">
    <property type="entry name" value="Puta_zinc/iron-chelating_dom"/>
</dbReference>
<dbReference type="InterPro" id="IPR052572">
    <property type="entry name" value="UPF0153_domain"/>
</dbReference>
<dbReference type="PANTHER" id="PTHR36931">
    <property type="entry name" value="UPF0153 PROTEIN YEIW"/>
    <property type="match status" value="1"/>
</dbReference>
<dbReference type="PANTHER" id="PTHR36931:SF1">
    <property type="entry name" value="UPF0153 PROTEIN YEIW"/>
    <property type="match status" value="1"/>
</dbReference>
<dbReference type="Pfam" id="PF03692">
    <property type="entry name" value="CxxCxxCC"/>
    <property type="match status" value="1"/>
</dbReference>
<gene>
    <name type="ordered locus">PA1578.1</name>
</gene>
<protein>
    <recommendedName>
        <fullName>UPF0153 protein PA1578.1</fullName>
    </recommendedName>
</protein>